<sequence>MPARISRATYAQMFGPTVGDKVRLADTDLIIEVERDLTTYGEEVKFGGGKVIRDGMGQSQLSRAEGAMDTVITNALILDHSGIYKADIGLLDGRIALIGKAGNPDTQPGISIIIGPGTEIIAGEGKIVTAGGIDTHVHFISPQQVDEALNAGITCMVGGGTGPAHGTLATTCTPGPWHIARLIQSFDGLPMNIGVFGKGNASLPGALEEMVRAGACGLKLHEDWGCTPAAIDNCLSVADHFDVQVAIHTDTLNEGGFVEDTLNAFKGRTIHSFHTEGAGGGHAPDIIRVCQYPNVLPASTNPTRPYTVNTIAEHLDMLMVCHHLSPAIPEDIAFAESRIRKETIAAEDILHDMGAFSIISSDSQAMGRVGEMIIRCWQTADKMKKQRGSLPDDRPGNDNYRARRYIAKYTINPAIAHGMAHEIGSVEVGKRADLVLWNSAFFGVKPDMVLLGGWIATAPMGDANGSIPTPQPMHTRPMFGSFGKALTNTSITFVSQAAMDEGLREKIGVDKQLVAVVNTRGGIGKHSMILNNAMPQMEVDPETYEVRADGELLTCEPVDVVPMAQRYFLF</sequence>
<dbReference type="EC" id="3.5.1.5" evidence="1"/>
<dbReference type="EMBL" id="AE008917">
    <property type="protein sequence ID" value="AAL52833.1"/>
    <property type="molecule type" value="Genomic_DNA"/>
</dbReference>
<dbReference type="PIR" id="AF3458">
    <property type="entry name" value="AF3458"/>
</dbReference>
<dbReference type="SMR" id="Q8YF72"/>
<dbReference type="MEROPS" id="M38.982"/>
<dbReference type="GeneID" id="29594508"/>
<dbReference type="KEGG" id="bme:BMEI1652"/>
<dbReference type="KEGG" id="bmel:DK63_1838"/>
<dbReference type="PATRIC" id="fig|224914.52.peg.1939"/>
<dbReference type="eggNOG" id="COG0804">
    <property type="taxonomic scope" value="Bacteria"/>
</dbReference>
<dbReference type="PhylomeDB" id="Q8YF72"/>
<dbReference type="UniPathway" id="UPA00258">
    <property type="reaction ID" value="UER00370"/>
</dbReference>
<dbReference type="Proteomes" id="UP000000419">
    <property type="component" value="Chromosome I"/>
</dbReference>
<dbReference type="GO" id="GO:0005737">
    <property type="term" value="C:cytoplasm"/>
    <property type="evidence" value="ECO:0007669"/>
    <property type="project" value="UniProtKB-SubCell"/>
</dbReference>
<dbReference type="GO" id="GO:0016151">
    <property type="term" value="F:nickel cation binding"/>
    <property type="evidence" value="ECO:0007669"/>
    <property type="project" value="UniProtKB-UniRule"/>
</dbReference>
<dbReference type="GO" id="GO:0009039">
    <property type="term" value="F:urease activity"/>
    <property type="evidence" value="ECO:0007669"/>
    <property type="project" value="UniProtKB-UniRule"/>
</dbReference>
<dbReference type="GO" id="GO:0043419">
    <property type="term" value="P:urea catabolic process"/>
    <property type="evidence" value="ECO:0007669"/>
    <property type="project" value="UniProtKB-UniRule"/>
</dbReference>
<dbReference type="CDD" id="cd00375">
    <property type="entry name" value="Urease_alpha"/>
    <property type="match status" value="1"/>
</dbReference>
<dbReference type="Gene3D" id="3.20.20.140">
    <property type="entry name" value="Metal-dependent hydrolases"/>
    <property type="match status" value="1"/>
</dbReference>
<dbReference type="Gene3D" id="2.30.40.10">
    <property type="entry name" value="Urease, subunit C, domain 1"/>
    <property type="match status" value="1"/>
</dbReference>
<dbReference type="HAMAP" id="MF_01953">
    <property type="entry name" value="Urease_alpha"/>
    <property type="match status" value="1"/>
</dbReference>
<dbReference type="InterPro" id="IPR006680">
    <property type="entry name" value="Amidohydro-rel"/>
</dbReference>
<dbReference type="InterPro" id="IPR011059">
    <property type="entry name" value="Metal-dep_hydrolase_composite"/>
</dbReference>
<dbReference type="InterPro" id="IPR032466">
    <property type="entry name" value="Metal_Hydrolase"/>
</dbReference>
<dbReference type="InterPro" id="IPR011612">
    <property type="entry name" value="Urease_alpha_N_dom"/>
</dbReference>
<dbReference type="InterPro" id="IPR050112">
    <property type="entry name" value="Urease_alpha_subunit"/>
</dbReference>
<dbReference type="InterPro" id="IPR017950">
    <property type="entry name" value="Urease_AS"/>
</dbReference>
<dbReference type="InterPro" id="IPR005848">
    <property type="entry name" value="Urease_asu"/>
</dbReference>
<dbReference type="InterPro" id="IPR017951">
    <property type="entry name" value="Urease_asu_c"/>
</dbReference>
<dbReference type="InterPro" id="IPR029754">
    <property type="entry name" value="Urease_Ni-bd"/>
</dbReference>
<dbReference type="NCBIfam" id="NF009685">
    <property type="entry name" value="PRK13206.1"/>
    <property type="match status" value="1"/>
</dbReference>
<dbReference type="NCBIfam" id="NF009686">
    <property type="entry name" value="PRK13207.1"/>
    <property type="match status" value="1"/>
</dbReference>
<dbReference type="NCBIfam" id="TIGR01792">
    <property type="entry name" value="urease_alph"/>
    <property type="match status" value="1"/>
</dbReference>
<dbReference type="PANTHER" id="PTHR43440">
    <property type="entry name" value="UREASE"/>
    <property type="match status" value="1"/>
</dbReference>
<dbReference type="PANTHER" id="PTHR43440:SF1">
    <property type="entry name" value="UREASE"/>
    <property type="match status" value="1"/>
</dbReference>
<dbReference type="Pfam" id="PF01979">
    <property type="entry name" value="Amidohydro_1"/>
    <property type="match status" value="1"/>
</dbReference>
<dbReference type="Pfam" id="PF00449">
    <property type="entry name" value="Urease_alpha"/>
    <property type="match status" value="1"/>
</dbReference>
<dbReference type="PRINTS" id="PR01752">
    <property type="entry name" value="UREASE"/>
</dbReference>
<dbReference type="SUPFAM" id="SSF51338">
    <property type="entry name" value="Composite domain of metallo-dependent hydrolases"/>
    <property type="match status" value="2"/>
</dbReference>
<dbReference type="SUPFAM" id="SSF51556">
    <property type="entry name" value="Metallo-dependent hydrolases"/>
    <property type="match status" value="1"/>
</dbReference>
<dbReference type="PROSITE" id="PS01120">
    <property type="entry name" value="UREASE_1"/>
    <property type="match status" value="1"/>
</dbReference>
<dbReference type="PROSITE" id="PS00145">
    <property type="entry name" value="UREASE_2"/>
    <property type="match status" value="1"/>
</dbReference>
<dbReference type="PROSITE" id="PS51368">
    <property type="entry name" value="UREASE_3"/>
    <property type="match status" value="1"/>
</dbReference>
<organism>
    <name type="scientific">Brucella melitensis biotype 1 (strain ATCC 23456 / CCUG 17765 / NCTC 10094 / 16M)</name>
    <dbReference type="NCBI Taxonomy" id="224914"/>
    <lineage>
        <taxon>Bacteria</taxon>
        <taxon>Pseudomonadati</taxon>
        <taxon>Pseudomonadota</taxon>
        <taxon>Alphaproteobacteria</taxon>
        <taxon>Hyphomicrobiales</taxon>
        <taxon>Brucellaceae</taxon>
        <taxon>Brucella/Ochrobactrum group</taxon>
        <taxon>Brucella</taxon>
    </lineage>
</organism>
<gene>
    <name evidence="1" type="primary">ureC1</name>
    <name type="ordered locus">BMEI1652</name>
</gene>
<reference key="1">
    <citation type="journal article" date="2002" name="Proc. Natl. Acad. Sci. U.S.A.">
        <title>The genome sequence of the facultative intracellular pathogen Brucella melitensis.</title>
        <authorList>
            <person name="DelVecchio V.G."/>
            <person name="Kapatral V."/>
            <person name="Redkar R.J."/>
            <person name="Patra G."/>
            <person name="Mujer C."/>
            <person name="Los T."/>
            <person name="Ivanova N."/>
            <person name="Anderson I."/>
            <person name="Bhattacharyya A."/>
            <person name="Lykidis A."/>
            <person name="Reznik G."/>
            <person name="Jablonski L."/>
            <person name="Larsen N."/>
            <person name="D'Souza M."/>
            <person name="Bernal A."/>
            <person name="Mazur M."/>
            <person name="Goltsman E."/>
            <person name="Selkov E."/>
            <person name="Elzer P.H."/>
            <person name="Hagius S."/>
            <person name="O'Callaghan D."/>
            <person name="Letesson J.-J."/>
            <person name="Haselkorn R."/>
            <person name="Kyrpides N.C."/>
            <person name="Overbeek R."/>
        </authorList>
    </citation>
    <scope>NUCLEOTIDE SEQUENCE [LARGE SCALE GENOMIC DNA]</scope>
    <source>
        <strain>ATCC 23456 / CCUG 17765 / NCTC 10094 / 16M</strain>
    </source>
</reference>
<protein>
    <recommendedName>
        <fullName evidence="1">Urease subunit alpha 1</fullName>
        <ecNumber evidence="1">3.5.1.5</ecNumber>
    </recommendedName>
    <alternativeName>
        <fullName evidence="1">Urea amidohydrolase subunit alpha 1</fullName>
    </alternativeName>
</protein>
<accession>Q8YF72</accession>
<feature type="chain" id="PRO_0000234143" description="Urease subunit alpha 1">
    <location>
        <begin position="1"/>
        <end position="570"/>
    </location>
</feature>
<feature type="domain" description="Urease" evidence="1">
    <location>
        <begin position="131"/>
        <end position="570"/>
    </location>
</feature>
<feature type="active site" description="Proton donor" evidence="1">
    <location>
        <position position="322"/>
    </location>
</feature>
<feature type="binding site" evidence="1">
    <location>
        <position position="136"/>
    </location>
    <ligand>
        <name>Ni(2+)</name>
        <dbReference type="ChEBI" id="CHEBI:49786"/>
        <label>1</label>
    </ligand>
</feature>
<feature type="binding site" evidence="1">
    <location>
        <position position="138"/>
    </location>
    <ligand>
        <name>Ni(2+)</name>
        <dbReference type="ChEBI" id="CHEBI:49786"/>
        <label>1</label>
    </ligand>
</feature>
<feature type="binding site" description="via carbamate group" evidence="1">
    <location>
        <position position="219"/>
    </location>
    <ligand>
        <name>Ni(2+)</name>
        <dbReference type="ChEBI" id="CHEBI:49786"/>
        <label>1</label>
    </ligand>
</feature>
<feature type="binding site" description="via carbamate group" evidence="1">
    <location>
        <position position="219"/>
    </location>
    <ligand>
        <name>Ni(2+)</name>
        <dbReference type="ChEBI" id="CHEBI:49786"/>
        <label>2</label>
    </ligand>
</feature>
<feature type="binding site" evidence="1">
    <location>
        <position position="221"/>
    </location>
    <ligand>
        <name>substrate</name>
    </ligand>
</feature>
<feature type="binding site" evidence="1">
    <location>
        <position position="248"/>
    </location>
    <ligand>
        <name>Ni(2+)</name>
        <dbReference type="ChEBI" id="CHEBI:49786"/>
        <label>2</label>
    </ligand>
</feature>
<feature type="binding site" evidence="1">
    <location>
        <position position="274"/>
    </location>
    <ligand>
        <name>Ni(2+)</name>
        <dbReference type="ChEBI" id="CHEBI:49786"/>
        <label>2</label>
    </ligand>
</feature>
<feature type="binding site" evidence="1">
    <location>
        <position position="362"/>
    </location>
    <ligand>
        <name>Ni(2+)</name>
        <dbReference type="ChEBI" id="CHEBI:49786"/>
        <label>1</label>
    </ligand>
</feature>
<feature type="modified residue" description="N6-carboxylysine" evidence="1">
    <location>
        <position position="219"/>
    </location>
</feature>
<name>URE11_BRUME</name>
<keyword id="KW-0963">Cytoplasm</keyword>
<keyword id="KW-0378">Hydrolase</keyword>
<keyword id="KW-0479">Metal-binding</keyword>
<keyword id="KW-0533">Nickel</keyword>
<proteinExistence type="inferred from homology"/>
<evidence type="ECO:0000255" key="1">
    <source>
        <dbReference type="HAMAP-Rule" id="MF_01953"/>
    </source>
</evidence>
<comment type="catalytic activity">
    <reaction evidence="1">
        <text>urea + 2 H2O + H(+) = hydrogencarbonate + 2 NH4(+)</text>
        <dbReference type="Rhea" id="RHEA:20557"/>
        <dbReference type="ChEBI" id="CHEBI:15377"/>
        <dbReference type="ChEBI" id="CHEBI:15378"/>
        <dbReference type="ChEBI" id="CHEBI:16199"/>
        <dbReference type="ChEBI" id="CHEBI:17544"/>
        <dbReference type="ChEBI" id="CHEBI:28938"/>
        <dbReference type="EC" id="3.5.1.5"/>
    </reaction>
</comment>
<comment type="cofactor">
    <cofactor evidence="1">
        <name>Ni cation</name>
        <dbReference type="ChEBI" id="CHEBI:25516"/>
    </cofactor>
    <text evidence="1">Binds 2 nickel ions per subunit.</text>
</comment>
<comment type="pathway">
    <text evidence="1">Nitrogen metabolism; urea degradation; CO(2) and NH(3) from urea (urease route): step 1/1.</text>
</comment>
<comment type="subunit">
    <text evidence="1">Heterotrimer of UreA (gamma), UreB (beta) and UreC (alpha) subunits. Three heterotrimers associate to form the active enzyme.</text>
</comment>
<comment type="subcellular location">
    <subcellularLocation>
        <location evidence="1">Cytoplasm</location>
    </subcellularLocation>
</comment>
<comment type="PTM">
    <text evidence="1">Carboxylation allows a single lysine to coordinate two nickel ions.</text>
</comment>
<comment type="similarity">
    <text evidence="1">Belongs to the metallo-dependent hydrolases superfamily. Urease alpha subunit family.</text>
</comment>